<keyword id="KW-0068">Autocatalytic cleavage</keyword>
<keyword id="KW-0963">Cytoplasm</keyword>
<keyword id="KW-0210">Decarboxylase</keyword>
<keyword id="KW-0456">Lyase</keyword>
<keyword id="KW-0566">Pantothenate biosynthesis</keyword>
<keyword id="KW-0670">Pyruvate</keyword>
<keyword id="KW-1185">Reference proteome</keyword>
<keyword id="KW-0704">Schiff base</keyword>
<keyword id="KW-0865">Zymogen</keyword>
<reference key="1">
    <citation type="journal article" date="2003" name="Proc. Natl. Acad. Sci. U.S.A.">
        <title>Complete genome sequence of Lactobacillus plantarum WCFS1.</title>
        <authorList>
            <person name="Kleerebezem M."/>
            <person name="Boekhorst J."/>
            <person name="van Kranenburg R."/>
            <person name="Molenaar D."/>
            <person name="Kuipers O.P."/>
            <person name="Leer R."/>
            <person name="Tarchini R."/>
            <person name="Peters S.A."/>
            <person name="Sandbrink H.M."/>
            <person name="Fiers M.W.E.J."/>
            <person name="Stiekema W."/>
            <person name="Klein Lankhorst R.M."/>
            <person name="Bron P.A."/>
            <person name="Hoffer S.M."/>
            <person name="Nierop Groot M.N."/>
            <person name="Kerkhoven R."/>
            <person name="De Vries M."/>
            <person name="Ursing B."/>
            <person name="De Vos W.M."/>
            <person name="Siezen R.J."/>
        </authorList>
    </citation>
    <scope>NUCLEOTIDE SEQUENCE [LARGE SCALE GENOMIC DNA]</scope>
    <source>
        <strain>ATCC BAA-793 / NCIMB 8826 / WCFS1</strain>
    </source>
</reference>
<reference key="2">
    <citation type="journal article" date="2012" name="J. Bacteriol.">
        <title>Complete resequencing and reannotation of the Lactobacillus plantarum WCFS1 genome.</title>
        <authorList>
            <person name="Siezen R.J."/>
            <person name="Francke C."/>
            <person name="Renckens B."/>
            <person name="Boekhorst J."/>
            <person name="Wels M."/>
            <person name="Kleerebezem M."/>
            <person name="van Hijum S.A."/>
        </authorList>
    </citation>
    <scope>NUCLEOTIDE SEQUENCE [LARGE SCALE GENOMIC DNA]</scope>
    <scope>GENOME REANNOTATION</scope>
    <source>
        <strain>ATCC BAA-793 / NCIMB 8826 / WCFS1</strain>
    </source>
</reference>
<protein>
    <recommendedName>
        <fullName evidence="1">Aspartate 1-decarboxylase</fullName>
        <ecNumber evidence="1">4.1.1.11</ecNumber>
    </recommendedName>
    <alternativeName>
        <fullName evidence="1">Aspartate alpha-decarboxylase</fullName>
    </alternativeName>
    <component>
        <recommendedName>
            <fullName evidence="1">Aspartate 1-decarboxylase beta chain</fullName>
        </recommendedName>
    </component>
    <component>
        <recommendedName>
            <fullName evidence="1">Aspartate 1-decarboxylase alpha chain</fullName>
        </recommendedName>
    </component>
</protein>
<dbReference type="EC" id="4.1.1.11" evidence="1"/>
<dbReference type="EMBL" id="AL935263">
    <property type="protein sequence ID" value="CCC78064.1"/>
    <property type="molecule type" value="Genomic_DNA"/>
</dbReference>
<dbReference type="RefSeq" id="WP_011101061.1">
    <property type="nucleotide sequence ID" value="NC_004567.2"/>
</dbReference>
<dbReference type="RefSeq" id="YP_004888578.1">
    <property type="nucleotide sequence ID" value="NC_004567.2"/>
</dbReference>
<dbReference type="SMR" id="Q88Z02"/>
<dbReference type="STRING" id="220668.lp_0579"/>
<dbReference type="EnsemblBacteria" id="CCC78064">
    <property type="protein sequence ID" value="CCC78064"/>
    <property type="gene ID" value="lp_0579"/>
</dbReference>
<dbReference type="KEGG" id="lpl:lp_0579"/>
<dbReference type="PATRIC" id="fig|220668.9.peg.482"/>
<dbReference type="eggNOG" id="COG0853">
    <property type="taxonomic scope" value="Bacteria"/>
</dbReference>
<dbReference type="HOGENOM" id="CLU_115305_2_0_9"/>
<dbReference type="OrthoDB" id="9803983at2"/>
<dbReference type="PhylomeDB" id="Q88Z02"/>
<dbReference type="BRENDA" id="4.1.1.11">
    <property type="organism ID" value="2849"/>
</dbReference>
<dbReference type="UniPathway" id="UPA00028">
    <property type="reaction ID" value="UER00002"/>
</dbReference>
<dbReference type="Proteomes" id="UP000000432">
    <property type="component" value="Chromosome"/>
</dbReference>
<dbReference type="GO" id="GO:0005829">
    <property type="term" value="C:cytosol"/>
    <property type="evidence" value="ECO:0007669"/>
    <property type="project" value="TreeGrafter"/>
</dbReference>
<dbReference type="GO" id="GO:0004068">
    <property type="term" value="F:aspartate 1-decarboxylase activity"/>
    <property type="evidence" value="ECO:0007669"/>
    <property type="project" value="UniProtKB-UniRule"/>
</dbReference>
<dbReference type="GO" id="GO:0006523">
    <property type="term" value="P:alanine biosynthetic process"/>
    <property type="evidence" value="ECO:0007669"/>
    <property type="project" value="InterPro"/>
</dbReference>
<dbReference type="GO" id="GO:0015940">
    <property type="term" value="P:pantothenate biosynthetic process"/>
    <property type="evidence" value="ECO:0007669"/>
    <property type="project" value="UniProtKB-UniRule"/>
</dbReference>
<dbReference type="CDD" id="cd06919">
    <property type="entry name" value="Asp_decarbox"/>
    <property type="match status" value="1"/>
</dbReference>
<dbReference type="Gene3D" id="2.40.40.20">
    <property type="match status" value="1"/>
</dbReference>
<dbReference type="HAMAP" id="MF_00446">
    <property type="entry name" value="PanD"/>
    <property type="match status" value="1"/>
</dbReference>
<dbReference type="InterPro" id="IPR009010">
    <property type="entry name" value="Asp_de-COase-like_dom_sf"/>
</dbReference>
<dbReference type="InterPro" id="IPR003190">
    <property type="entry name" value="Asp_decarbox"/>
</dbReference>
<dbReference type="NCBIfam" id="TIGR00223">
    <property type="entry name" value="panD"/>
    <property type="match status" value="1"/>
</dbReference>
<dbReference type="PANTHER" id="PTHR21012">
    <property type="entry name" value="ASPARTATE 1-DECARBOXYLASE"/>
    <property type="match status" value="1"/>
</dbReference>
<dbReference type="PANTHER" id="PTHR21012:SF0">
    <property type="entry name" value="ASPARTATE 1-DECARBOXYLASE"/>
    <property type="match status" value="1"/>
</dbReference>
<dbReference type="Pfam" id="PF02261">
    <property type="entry name" value="Asp_decarbox"/>
    <property type="match status" value="1"/>
</dbReference>
<dbReference type="PIRSF" id="PIRSF006246">
    <property type="entry name" value="Asp_decarbox"/>
    <property type="match status" value="1"/>
</dbReference>
<dbReference type="SUPFAM" id="SSF50692">
    <property type="entry name" value="ADC-like"/>
    <property type="match status" value="1"/>
</dbReference>
<evidence type="ECO:0000255" key="1">
    <source>
        <dbReference type="HAMAP-Rule" id="MF_00446"/>
    </source>
</evidence>
<gene>
    <name evidence="1" type="primary">panD</name>
    <name type="ordered locus">lp_0579</name>
</gene>
<feature type="chain" id="PRO_0000023111" description="Aspartate 1-decarboxylase beta chain" evidence="1">
    <location>
        <begin position="1"/>
        <end position="24"/>
    </location>
</feature>
<feature type="chain" id="PRO_0000023112" description="Aspartate 1-decarboxylase alpha chain" evidence="1">
    <location>
        <begin position="25"/>
        <end position="130"/>
    </location>
</feature>
<feature type="active site" description="Schiff-base intermediate with substrate; via pyruvic acid" evidence="1">
    <location>
        <position position="25"/>
    </location>
</feature>
<feature type="active site" description="Proton donor" evidence="1">
    <location>
        <position position="58"/>
    </location>
</feature>
<feature type="binding site" evidence="1">
    <location>
        <position position="57"/>
    </location>
    <ligand>
        <name>substrate</name>
    </ligand>
</feature>
<feature type="binding site" evidence="1">
    <location>
        <begin position="73"/>
        <end position="75"/>
    </location>
    <ligand>
        <name>substrate</name>
    </ligand>
</feature>
<feature type="modified residue" description="Pyruvic acid (Ser)" evidence="1">
    <location>
        <position position="25"/>
    </location>
</feature>
<accession>Q88Z02</accession>
<accession>F9UL49</accession>
<comment type="function">
    <text evidence="1">Catalyzes the pyruvoyl-dependent decarboxylation of aspartate to produce beta-alanine.</text>
</comment>
<comment type="catalytic activity">
    <reaction evidence="1">
        <text>L-aspartate + H(+) = beta-alanine + CO2</text>
        <dbReference type="Rhea" id="RHEA:19497"/>
        <dbReference type="ChEBI" id="CHEBI:15378"/>
        <dbReference type="ChEBI" id="CHEBI:16526"/>
        <dbReference type="ChEBI" id="CHEBI:29991"/>
        <dbReference type="ChEBI" id="CHEBI:57966"/>
        <dbReference type="EC" id="4.1.1.11"/>
    </reaction>
</comment>
<comment type="cofactor">
    <cofactor evidence="1">
        <name>pyruvate</name>
        <dbReference type="ChEBI" id="CHEBI:15361"/>
    </cofactor>
    <text evidence="1">Binds 1 pyruvoyl group covalently per subunit.</text>
</comment>
<comment type="pathway">
    <text evidence="1">Cofactor biosynthesis; (R)-pantothenate biosynthesis; beta-alanine from L-aspartate: step 1/1.</text>
</comment>
<comment type="subunit">
    <text evidence="1">Heterooctamer of four alpha and four beta subunits.</text>
</comment>
<comment type="subcellular location">
    <subcellularLocation>
        <location evidence="1">Cytoplasm</location>
    </subcellularLocation>
</comment>
<comment type="PTM">
    <text evidence="1">Is synthesized initially as an inactive proenzyme, which is activated by self-cleavage at a specific serine bond to produce a beta-subunit with a hydroxyl group at its C-terminus and an alpha-subunit with a pyruvoyl group at its N-terminus.</text>
</comment>
<comment type="similarity">
    <text evidence="1">Belongs to the PanD family.</text>
</comment>
<sequence length="130" mass="14458">MLIDMLKGKIHRATVTQADLEYVGSITIDETLMEASGILEYEKVQIADVNNGARFETYVIAGPRDSGVICLNGATARCASVGDKVIIMNYAQFEPEEAKHAKPYVVLVDDENRLTKRVRYEKHGLLAEEL</sequence>
<name>PAND_LACPL</name>
<proteinExistence type="inferred from homology"/>
<organism>
    <name type="scientific">Lactiplantibacillus plantarum (strain ATCC BAA-793 / NCIMB 8826 / WCFS1)</name>
    <name type="common">Lactobacillus plantarum</name>
    <dbReference type="NCBI Taxonomy" id="220668"/>
    <lineage>
        <taxon>Bacteria</taxon>
        <taxon>Bacillati</taxon>
        <taxon>Bacillota</taxon>
        <taxon>Bacilli</taxon>
        <taxon>Lactobacillales</taxon>
        <taxon>Lactobacillaceae</taxon>
        <taxon>Lactiplantibacillus</taxon>
    </lineage>
</organism>